<reference key="1">
    <citation type="journal article" date="2009" name="Infect. Immun.">
        <title>Comparative genomics reveal extensive transposon-mediated genomic plasticity and diversity among potential effector proteins within the genus Coxiella.</title>
        <authorList>
            <person name="Beare P.A."/>
            <person name="Unsworth N."/>
            <person name="Andoh M."/>
            <person name="Voth D.E."/>
            <person name="Omsland A."/>
            <person name="Gilk S.D."/>
            <person name="Williams K.P."/>
            <person name="Sobral B.W."/>
            <person name="Kupko J.J. III"/>
            <person name="Porcella S.F."/>
            <person name="Samuel J.E."/>
            <person name="Heinzen R.A."/>
        </authorList>
    </citation>
    <scope>NUCLEOTIDE SEQUENCE [LARGE SCALE GENOMIC DNA]</scope>
    <source>
        <strain>CbuG_Q212</strain>
    </source>
</reference>
<accession>B6J3W7</accession>
<feature type="chain" id="PRO_1000139427" description="CTP synthase">
    <location>
        <begin position="1"/>
        <end position="555"/>
    </location>
</feature>
<feature type="domain" description="Glutamine amidotransferase type-1" evidence="1">
    <location>
        <begin position="290"/>
        <end position="541"/>
    </location>
</feature>
<feature type="region of interest" description="Amidoligase domain" evidence="1">
    <location>
        <begin position="1"/>
        <end position="265"/>
    </location>
</feature>
<feature type="active site" description="Nucleophile; for glutamine hydrolysis" evidence="1">
    <location>
        <position position="378"/>
    </location>
</feature>
<feature type="active site" evidence="1">
    <location>
        <position position="514"/>
    </location>
</feature>
<feature type="active site" evidence="1">
    <location>
        <position position="516"/>
    </location>
</feature>
<feature type="binding site" evidence="1">
    <location>
        <position position="13"/>
    </location>
    <ligand>
        <name>CTP</name>
        <dbReference type="ChEBI" id="CHEBI:37563"/>
        <note>allosteric inhibitor</note>
    </ligand>
</feature>
<feature type="binding site" evidence="1">
    <location>
        <position position="13"/>
    </location>
    <ligand>
        <name>UTP</name>
        <dbReference type="ChEBI" id="CHEBI:46398"/>
    </ligand>
</feature>
<feature type="binding site" evidence="1">
    <location>
        <begin position="14"/>
        <end position="19"/>
    </location>
    <ligand>
        <name>ATP</name>
        <dbReference type="ChEBI" id="CHEBI:30616"/>
    </ligand>
</feature>
<feature type="binding site" evidence="1">
    <location>
        <position position="71"/>
    </location>
    <ligand>
        <name>ATP</name>
        <dbReference type="ChEBI" id="CHEBI:30616"/>
    </ligand>
</feature>
<feature type="binding site" evidence="1">
    <location>
        <position position="71"/>
    </location>
    <ligand>
        <name>Mg(2+)</name>
        <dbReference type="ChEBI" id="CHEBI:18420"/>
    </ligand>
</feature>
<feature type="binding site" evidence="1">
    <location>
        <position position="139"/>
    </location>
    <ligand>
        <name>Mg(2+)</name>
        <dbReference type="ChEBI" id="CHEBI:18420"/>
    </ligand>
</feature>
<feature type="binding site" evidence="1">
    <location>
        <begin position="146"/>
        <end position="148"/>
    </location>
    <ligand>
        <name>CTP</name>
        <dbReference type="ChEBI" id="CHEBI:37563"/>
        <note>allosteric inhibitor</note>
    </ligand>
</feature>
<feature type="binding site" evidence="1">
    <location>
        <begin position="186"/>
        <end position="191"/>
    </location>
    <ligand>
        <name>CTP</name>
        <dbReference type="ChEBI" id="CHEBI:37563"/>
        <note>allosteric inhibitor</note>
    </ligand>
</feature>
<feature type="binding site" evidence="1">
    <location>
        <begin position="186"/>
        <end position="191"/>
    </location>
    <ligand>
        <name>UTP</name>
        <dbReference type="ChEBI" id="CHEBI:46398"/>
    </ligand>
</feature>
<feature type="binding site" evidence="1">
    <location>
        <position position="222"/>
    </location>
    <ligand>
        <name>CTP</name>
        <dbReference type="ChEBI" id="CHEBI:37563"/>
        <note>allosteric inhibitor</note>
    </ligand>
</feature>
<feature type="binding site" evidence="1">
    <location>
        <position position="222"/>
    </location>
    <ligand>
        <name>UTP</name>
        <dbReference type="ChEBI" id="CHEBI:46398"/>
    </ligand>
</feature>
<feature type="binding site" evidence="1">
    <location>
        <position position="351"/>
    </location>
    <ligand>
        <name>L-glutamine</name>
        <dbReference type="ChEBI" id="CHEBI:58359"/>
    </ligand>
</feature>
<feature type="binding site" evidence="1">
    <location>
        <begin position="379"/>
        <end position="382"/>
    </location>
    <ligand>
        <name>L-glutamine</name>
        <dbReference type="ChEBI" id="CHEBI:58359"/>
    </ligand>
</feature>
<feature type="binding site" evidence="1">
    <location>
        <position position="402"/>
    </location>
    <ligand>
        <name>L-glutamine</name>
        <dbReference type="ChEBI" id="CHEBI:58359"/>
    </ligand>
</feature>
<feature type="binding site" evidence="1">
    <location>
        <position position="469"/>
    </location>
    <ligand>
        <name>L-glutamine</name>
        <dbReference type="ChEBI" id="CHEBI:58359"/>
    </ligand>
</feature>
<dbReference type="EC" id="6.3.4.2" evidence="1"/>
<dbReference type="EMBL" id="CP001019">
    <property type="protein sequence ID" value="ACJ17774.1"/>
    <property type="molecule type" value="Genomic_DNA"/>
</dbReference>
<dbReference type="RefSeq" id="WP_012569719.1">
    <property type="nucleotide sequence ID" value="NC_011527.1"/>
</dbReference>
<dbReference type="SMR" id="B6J3W7"/>
<dbReference type="MEROPS" id="C26.964"/>
<dbReference type="KEGG" id="cbg:CbuG_0340"/>
<dbReference type="HOGENOM" id="CLU_011675_5_0_6"/>
<dbReference type="UniPathway" id="UPA00159">
    <property type="reaction ID" value="UER00277"/>
</dbReference>
<dbReference type="GO" id="GO:0005829">
    <property type="term" value="C:cytosol"/>
    <property type="evidence" value="ECO:0007669"/>
    <property type="project" value="TreeGrafter"/>
</dbReference>
<dbReference type="GO" id="GO:0005524">
    <property type="term" value="F:ATP binding"/>
    <property type="evidence" value="ECO:0007669"/>
    <property type="project" value="UniProtKB-KW"/>
</dbReference>
<dbReference type="GO" id="GO:0003883">
    <property type="term" value="F:CTP synthase activity"/>
    <property type="evidence" value="ECO:0007669"/>
    <property type="project" value="UniProtKB-UniRule"/>
</dbReference>
<dbReference type="GO" id="GO:0004359">
    <property type="term" value="F:glutaminase activity"/>
    <property type="evidence" value="ECO:0007669"/>
    <property type="project" value="RHEA"/>
</dbReference>
<dbReference type="GO" id="GO:0042802">
    <property type="term" value="F:identical protein binding"/>
    <property type="evidence" value="ECO:0007669"/>
    <property type="project" value="TreeGrafter"/>
</dbReference>
<dbReference type="GO" id="GO:0046872">
    <property type="term" value="F:metal ion binding"/>
    <property type="evidence" value="ECO:0007669"/>
    <property type="project" value="UniProtKB-KW"/>
</dbReference>
<dbReference type="GO" id="GO:0044210">
    <property type="term" value="P:'de novo' CTP biosynthetic process"/>
    <property type="evidence" value="ECO:0007669"/>
    <property type="project" value="UniProtKB-UniRule"/>
</dbReference>
<dbReference type="GO" id="GO:0019856">
    <property type="term" value="P:pyrimidine nucleobase biosynthetic process"/>
    <property type="evidence" value="ECO:0007669"/>
    <property type="project" value="TreeGrafter"/>
</dbReference>
<dbReference type="CDD" id="cd03113">
    <property type="entry name" value="CTPS_N"/>
    <property type="match status" value="1"/>
</dbReference>
<dbReference type="CDD" id="cd01746">
    <property type="entry name" value="GATase1_CTP_Synthase"/>
    <property type="match status" value="1"/>
</dbReference>
<dbReference type="FunFam" id="3.40.50.300:FF:000009">
    <property type="entry name" value="CTP synthase"/>
    <property type="match status" value="1"/>
</dbReference>
<dbReference type="FunFam" id="3.40.50.880:FF:000002">
    <property type="entry name" value="CTP synthase"/>
    <property type="match status" value="1"/>
</dbReference>
<dbReference type="Gene3D" id="3.40.50.880">
    <property type="match status" value="1"/>
</dbReference>
<dbReference type="Gene3D" id="3.40.50.300">
    <property type="entry name" value="P-loop containing nucleotide triphosphate hydrolases"/>
    <property type="match status" value="1"/>
</dbReference>
<dbReference type="HAMAP" id="MF_01227">
    <property type="entry name" value="PyrG"/>
    <property type="match status" value="1"/>
</dbReference>
<dbReference type="InterPro" id="IPR029062">
    <property type="entry name" value="Class_I_gatase-like"/>
</dbReference>
<dbReference type="InterPro" id="IPR004468">
    <property type="entry name" value="CTP_synthase"/>
</dbReference>
<dbReference type="InterPro" id="IPR017456">
    <property type="entry name" value="CTP_synthase_N"/>
</dbReference>
<dbReference type="InterPro" id="IPR017926">
    <property type="entry name" value="GATASE"/>
</dbReference>
<dbReference type="InterPro" id="IPR033828">
    <property type="entry name" value="GATase1_CTP_Synthase"/>
</dbReference>
<dbReference type="InterPro" id="IPR027417">
    <property type="entry name" value="P-loop_NTPase"/>
</dbReference>
<dbReference type="NCBIfam" id="NF003792">
    <property type="entry name" value="PRK05380.1"/>
    <property type="match status" value="1"/>
</dbReference>
<dbReference type="NCBIfam" id="TIGR00337">
    <property type="entry name" value="PyrG"/>
    <property type="match status" value="1"/>
</dbReference>
<dbReference type="PANTHER" id="PTHR11550">
    <property type="entry name" value="CTP SYNTHASE"/>
    <property type="match status" value="1"/>
</dbReference>
<dbReference type="PANTHER" id="PTHR11550:SF0">
    <property type="entry name" value="CTP SYNTHASE-RELATED"/>
    <property type="match status" value="1"/>
</dbReference>
<dbReference type="Pfam" id="PF06418">
    <property type="entry name" value="CTP_synth_N"/>
    <property type="match status" value="1"/>
</dbReference>
<dbReference type="Pfam" id="PF00117">
    <property type="entry name" value="GATase"/>
    <property type="match status" value="1"/>
</dbReference>
<dbReference type="SUPFAM" id="SSF52317">
    <property type="entry name" value="Class I glutamine amidotransferase-like"/>
    <property type="match status" value="1"/>
</dbReference>
<dbReference type="SUPFAM" id="SSF52540">
    <property type="entry name" value="P-loop containing nucleoside triphosphate hydrolases"/>
    <property type="match status" value="1"/>
</dbReference>
<dbReference type="PROSITE" id="PS51273">
    <property type="entry name" value="GATASE_TYPE_1"/>
    <property type="match status" value="1"/>
</dbReference>
<evidence type="ECO:0000255" key="1">
    <source>
        <dbReference type="HAMAP-Rule" id="MF_01227"/>
    </source>
</evidence>
<name>PYRG_COXB2</name>
<protein>
    <recommendedName>
        <fullName evidence="1">CTP synthase</fullName>
        <ecNumber evidence="1">6.3.4.2</ecNumber>
    </recommendedName>
    <alternativeName>
        <fullName evidence="1">Cytidine 5'-triphosphate synthase</fullName>
    </alternativeName>
    <alternativeName>
        <fullName evidence="1">Cytidine triphosphate synthetase</fullName>
        <shortName evidence="1">CTP synthetase</shortName>
        <shortName evidence="1">CTPS</shortName>
    </alternativeName>
    <alternativeName>
        <fullName evidence="1">UTP--ammonia ligase</fullName>
    </alternativeName>
</protein>
<comment type="function">
    <text evidence="1">Catalyzes the ATP-dependent amination of UTP to CTP with either L-glutamine or ammonia as the source of nitrogen. Regulates intracellular CTP levels through interactions with the four ribonucleotide triphosphates.</text>
</comment>
<comment type="catalytic activity">
    <reaction evidence="1">
        <text>UTP + L-glutamine + ATP + H2O = CTP + L-glutamate + ADP + phosphate + 2 H(+)</text>
        <dbReference type="Rhea" id="RHEA:26426"/>
        <dbReference type="ChEBI" id="CHEBI:15377"/>
        <dbReference type="ChEBI" id="CHEBI:15378"/>
        <dbReference type="ChEBI" id="CHEBI:29985"/>
        <dbReference type="ChEBI" id="CHEBI:30616"/>
        <dbReference type="ChEBI" id="CHEBI:37563"/>
        <dbReference type="ChEBI" id="CHEBI:43474"/>
        <dbReference type="ChEBI" id="CHEBI:46398"/>
        <dbReference type="ChEBI" id="CHEBI:58359"/>
        <dbReference type="ChEBI" id="CHEBI:456216"/>
        <dbReference type="EC" id="6.3.4.2"/>
    </reaction>
</comment>
<comment type="catalytic activity">
    <reaction evidence="1">
        <text>L-glutamine + H2O = L-glutamate + NH4(+)</text>
        <dbReference type="Rhea" id="RHEA:15889"/>
        <dbReference type="ChEBI" id="CHEBI:15377"/>
        <dbReference type="ChEBI" id="CHEBI:28938"/>
        <dbReference type="ChEBI" id="CHEBI:29985"/>
        <dbReference type="ChEBI" id="CHEBI:58359"/>
    </reaction>
</comment>
<comment type="catalytic activity">
    <reaction evidence="1">
        <text>UTP + NH4(+) + ATP = CTP + ADP + phosphate + 2 H(+)</text>
        <dbReference type="Rhea" id="RHEA:16597"/>
        <dbReference type="ChEBI" id="CHEBI:15378"/>
        <dbReference type="ChEBI" id="CHEBI:28938"/>
        <dbReference type="ChEBI" id="CHEBI:30616"/>
        <dbReference type="ChEBI" id="CHEBI:37563"/>
        <dbReference type="ChEBI" id="CHEBI:43474"/>
        <dbReference type="ChEBI" id="CHEBI:46398"/>
        <dbReference type="ChEBI" id="CHEBI:456216"/>
    </reaction>
</comment>
<comment type="activity regulation">
    <text evidence="1">Allosterically activated by GTP, when glutamine is the substrate; GTP has no effect on the reaction when ammonia is the substrate. The allosteric effector GTP functions by stabilizing the protein conformation that binds the tetrahedral intermediate(s) formed during glutamine hydrolysis. Inhibited by the product CTP, via allosteric rather than competitive inhibition.</text>
</comment>
<comment type="pathway">
    <text evidence="1">Pyrimidine metabolism; CTP biosynthesis via de novo pathway; CTP from UDP: step 2/2.</text>
</comment>
<comment type="subunit">
    <text evidence="1">Homotetramer.</text>
</comment>
<comment type="miscellaneous">
    <text evidence="1">CTPSs have evolved a hybrid strategy for distinguishing between UTP and CTP. The overlapping regions of the product feedback inhibitory and substrate sites recognize a common feature in both compounds, the triphosphate moiety. To differentiate isosteric substrate and product pyrimidine rings, an additional pocket far from the expected kinase/ligase catalytic site, specifically recognizes the cytosine and ribose portions of the product inhibitor.</text>
</comment>
<comment type="similarity">
    <text evidence="1">Belongs to the CTP synthase family.</text>
</comment>
<gene>
    <name evidence="1" type="primary">pyrG</name>
    <name type="ordered locus">CbuG_0340</name>
</gene>
<keyword id="KW-0067">ATP-binding</keyword>
<keyword id="KW-0315">Glutamine amidotransferase</keyword>
<keyword id="KW-0436">Ligase</keyword>
<keyword id="KW-0460">Magnesium</keyword>
<keyword id="KW-0479">Metal-binding</keyword>
<keyword id="KW-0547">Nucleotide-binding</keyword>
<keyword id="KW-0665">Pyrimidine biosynthesis</keyword>
<organism>
    <name type="scientific">Coxiella burnetii (strain CbuG_Q212)</name>
    <name type="common">Coxiella burnetii (strain Q212)</name>
    <dbReference type="NCBI Taxonomy" id="434923"/>
    <lineage>
        <taxon>Bacteria</taxon>
        <taxon>Pseudomonadati</taxon>
        <taxon>Pseudomonadota</taxon>
        <taxon>Gammaproteobacteria</taxon>
        <taxon>Legionellales</taxon>
        <taxon>Coxiellaceae</taxon>
        <taxon>Coxiella</taxon>
    </lineage>
</organism>
<proteinExistence type="inferred from homology"/>
<sequence>MTRYIFITGGVVSSLGKGITSASLGAILEAQGLTVTLLKLDPYINVDPGTMSPFQHGEVFVTEDGAETDLDLGHYERFVNATMTRKNNFTTGRVYADVIRKERRGDYLGGTIQVIPHITDEIKAKIREGADGADVALVEVGGTVGDIESLPFLEAIRQMRIELGDQQTLFIHLTLVPYVAVAGEIKTKPTQHSVKELRSIGIQPDILVCRSEQPLPDAERAKIALFTNVPEPSVISLSDVKSIYEIPLILRDQGLGNRVCEKLNIKATAADLDDWKKVVQAQKNPRHTVTVAVVGKYVDLEDSYKSLSEALIHAGIHTQTRVVIEYIDSEAIELHGTELLKKVDAILVPGGFGSRGIEGKILAAQYARENGIPYFGICLGMQIAIIEFARHKAQMENANSTEFDPKTPFPVVALVSEWMAKEGIIEKRKWGDDLGGTMRLGGQPCRLKIDSLARRLYGEDRVIERHRHRYEVNNDLIGELEKKGLVISGRSIDDRLVEMIELADHPWFVGCQFHPEFTSTPRKGHPLFIGFIKAGLAAKEAKKAVLAAPSQEKTD</sequence>